<name>LECA_SARPE</name>
<accession>P05047</accession>
<evidence type="ECO:0000255" key="1">
    <source>
        <dbReference type="PROSITE-ProRule" id="PRU00040"/>
    </source>
</evidence>
<evidence type="ECO:0000305" key="2"/>
<organism>
    <name type="scientific">Sarcophaga peregrina</name>
    <name type="common">Flesh fly</name>
    <name type="synonym">Boettcherisca peregrina</name>
    <dbReference type="NCBI Taxonomy" id="7386"/>
    <lineage>
        <taxon>Eukaryota</taxon>
        <taxon>Metazoa</taxon>
        <taxon>Ecdysozoa</taxon>
        <taxon>Arthropoda</taxon>
        <taxon>Hexapoda</taxon>
        <taxon>Insecta</taxon>
        <taxon>Pterygota</taxon>
        <taxon>Neoptera</taxon>
        <taxon>Endopterygota</taxon>
        <taxon>Diptera</taxon>
        <taxon>Brachycera</taxon>
        <taxon>Muscomorpha</taxon>
        <taxon>Oestroidea</taxon>
        <taxon>Sarcophagidae</taxon>
        <taxon>Sarcophaga</taxon>
        <taxon>Boettcherisca</taxon>
    </lineage>
</organism>
<reference key="1">
    <citation type="journal article" date="1985" name="J. Biol. Chem.">
        <title>Cloning and sequencing of cDNA of Sarcophaga peregrina humoral lectin induced on injury of the body wall.</title>
        <authorList>
            <person name="Takahashi H."/>
            <person name="Komano H."/>
            <person name="Kawaguchi N."/>
            <person name="Kitamura N."/>
            <person name="Nakanishi S."/>
            <person name="Natori S."/>
        </authorList>
    </citation>
    <scope>NUCLEOTIDE SEQUENCE [MRNA]</scope>
    <scope>PARTIAL PROTEIN SEQUENCE</scope>
</reference>
<reference key="2">
    <citation type="journal article" date="1994" name="Eur. J. Biochem.">
        <title>Purification and characterization of ATBP, a novel protein that binds to A/T stretches in three segments of the Sarcophaga lectin gene.</title>
        <authorList>
            <person name="Matsui M."/>
            <person name="Kobayashi A."/>
            <person name="Kubo T."/>
            <person name="Natori S."/>
        </authorList>
    </citation>
    <scope>NUCLEOTIDE SEQUENCE [GENOMIC DNA]</scope>
</reference>
<reference key="3">
    <citation type="journal article" date="1989" name="Biochim. Biophys. Acta">
        <title>Cloning and in vitro transcription of the Sarcophaga lectin gene.</title>
        <authorList>
            <person name="Kobayashi A."/>
            <person name="Hirai H."/>
            <person name="Kubo T."/>
            <person name="Veno K."/>
            <person name="Nakanishi Y."/>
            <person name="Natori S."/>
        </authorList>
    </citation>
    <scope>NUCLEOTIDE SEQUENCE [GENOMIC DNA] OF 1-38</scope>
</reference>
<proteinExistence type="evidence at protein level"/>
<dbReference type="EMBL" id="M11673">
    <property type="protein sequence ID" value="AAA29983.1"/>
    <property type="molecule type" value="mRNA"/>
</dbReference>
<dbReference type="EMBL" id="D14870">
    <property type="protein sequence ID" value="BAA03586.1"/>
    <property type="molecule type" value="Genomic_DNA"/>
</dbReference>
<dbReference type="EMBL" id="X16659">
    <property type="protein sequence ID" value="CAA34645.1"/>
    <property type="molecule type" value="Genomic_DNA"/>
</dbReference>
<dbReference type="PIR" id="S07759">
    <property type="entry name" value="LNFHLS"/>
</dbReference>
<dbReference type="SMR" id="P05047"/>
<dbReference type="GO" id="GO:0030246">
    <property type="term" value="F:carbohydrate binding"/>
    <property type="evidence" value="ECO:0007669"/>
    <property type="project" value="UniProtKB-KW"/>
</dbReference>
<dbReference type="CDD" id="cd00037">
    <property type="entry name" value="CLECT"/>
    <property type="match status" value="1"/>
</dbReference>
<dbReference type="Gene3D" id="3.10.100.10">
    <property type="entry name" value="Mannose-Binding Protein A, subunit A"/>
    <property type="match status" value="1"/>
</dbReference>
<dbReference type="InterPro" id="IPR001304">
    <property type="entry name" value="C-type_lectin-like"/>
</dbReference>
<dbReference type="InterPro" id="IPR016186">
    <property type="entry name" value="C-type_lectin-like/link_sf"/>
</dbReference>
<dbReference type="InterPro" id="IPR050111">
    <property type="entry name" value="C-type_lectin/snaclec_domain"/>
</dbReference>
<dbReference type="InterPro" id="IPR018378">
    <property type="entry name" value="C-type_lectin_CS"/>
</dbReference>
<dbReference type="InterPro" id="IPR016187">
    <property type="entry name" value="CTDL_fold"/>
</dbReference>
<dbReference type="PANTHER" id="PTHR22803">
    <property type="entry name" value="MANNOSE, PHOSPHOLIPASE, LECTIN RECEPTOR RELATED"/>
    <property type="match status" value="1"/>
</dbReference>
<dbReference type="Pfam" id="PF00059">
    <property type="entry name" value="Lectin_C"/>
    <property type="match status" value="1"/>
</dbReference>
<dbReference type="SMART" id="SM00034">
    <property type="entry name" value="CLECT"/>
    <property type="match status" value="1"/>
</dbReference>
<dbReference type="SUPFAM" id="SSF56436">
    <property type="entry name" value="C-type lectin-like"/>
    <property type="match status" value="1"/>
</dbReference>
<dbReference type="PROSITE" id="PS00615">
    <property type="entry name" value="C_TYPE_LECTIN_1"/>
    <property type="match status" value="1"/>
</dbReference>
<dbReference type="PROSITE" id="PS50041">
    <property type="entry name" value="C_TYPE_LECTIN_2"/>
    <property type="match status" value="1"/>
</dbReference>
<sequence>MSLTMKNVEGFVIFLVIFTSTAAVPQLQKALDGREYLIETELKYNWHQAWHECARHDQQLVTIESADKNNAIIDLVKRVVGKSHNLWLGGNDEYSSSRDYGRPFFWSPTGQAFSFAYWSENNPDNYKHQEHCVHIWDTKPLYQWNDNDCNVKMGYICEPNHFRETYDQALKQKCEAIKITNSKISTEFDQLHAKQSLEFDSITQNVAKVNEDWKIEIQKLQNATQIAIQQIMENHEKKIRDLSDNLLKQLQDSNEQLKQSTDHMNASFGEKLKGQQAENNEIC</sequence>
<protein>
    <recommendedName>
        <fullName>Lectin subunit alpha</fullName>
    </recommendedName>
</protein>
<comment type="function">
    <text>Role in the defense system of the organism against microorganisms. This lectin binds galactose.</text>
</comment>
<comment type="induction">
    <text>By injury of the body wall.</text>
</comment>
<comment type="caution">
    <text evidence="2">It is uncertain whether Met-1 or Met-5 is the initiator.</text>
</comment>
<keyword id="KW-0903">Direct protein sequencing</keyword>
<keyword id="KW-1015">Disulfide bond</keyword>
<keyword id="KW-0430">Lectin</keyword>
<keyword id="KW-0732">Signal</keyword>
<feature type="signal peptide">
    <location>
        <begin position="1"/>
        <end position="23"/>
    </location>
</feature>
<feature type="chain" id="PRO_0000017393" description="Lectin subunit alpha">
    <location>
        <begin position="24"/>
        <end position="283"/>
    </location>
</feature>
<feature type="domain" description="C-type lectin" evidence="1">
    <location>
        <begin position="51"/>
        <end position="159"/>
    </location>
</feature>
<feature type="disulfide bond" evidence="1">
    <location>
        <begin position="53"/>
        <end position="157"/>
    </location>
</feature>
<feature type="disulfide bond" evidence="1">
    <location>
        <begin position="132"/>
        <end position="149"/>
    </location>
</feature>